<name>RL13_ARCFU</name>
<accession>O29137</accession>
<reference key="1">
    <citation type="journal article" date="1997" name="Nature">
        <title>The complete genome sequence of the hyperthermophilic, sulphate-reducing archaeon Archaeoglobus fulgidus.</title>
        <authorList>
            <person name="Klenk H.-P."/>
            <person name="Clayton R.A."/>
            <person name="Tomb J.-F."/>
            <person name="White O."/>
            <person name="Nelson K.E."/>
            <person name="Ketchum K.A."/>
            <person name="Dodson R.J."/>
            <person name="Gwinn M.L."/>
            <person name="Hickey E.K."/>
            <person name="Peterson J.D."/>
            <person name="Richardson D.L."/>
            <person name="Kerlavage A.R."/>
            <person name="Graham D.E."/>
            <person name="Kyrpides N.C."/>
            <person name="Fleischmann R.D."/>
            <person name="Quackenbush J."/>
            <person name="Lee N.H."/>
            <person name="Sutton G.G."/>
            <person name="Gill S.R."/>
            <person name="Kirkness E.F."/>
            <person name="Dougherty B.A."/>
            <person name="McKenney K."/>
            <person name="Adams M.D."/>
            <person name="Loftus B.J."/>
            <person name="Peterson S.N."/>
            <person name="Reich C.I."/>
            <person name="McNeil L.K."/>
            <person name="Badger J.H."/>
            <person name="Glodek A."/>
            <person name="Zhou L."/>
            <person name="Overbeek R."/>
            <person name="Gocayne J.D."/>
            <person name="Weidman J.F."/>
            <person name="McDonald L.A."/>
            <person name="Utterback T.R."/>
            <person name="Cotton M.D."/>
            <person name="Spriggs T."/>
            <person name="Artiach P."/>
            <person name="Kaine B.P."/>
            <person name="Sykes S.M."/>
            <person name="Sadow P.W."/>
            <person name="D'Andrea K.P."/>
            <person name="Bowman C."/>
            <person name="Fujii C."/>
            <person name="Garland S.A."/>
            <person name="Mason T.M."/>
            <person name="Olsen G.J."/>
            <person name="Fraser C.M."/>
            <person name="Smith H.O."/>
            <person name="Woese C.R."/>
            <person name="Venter J.C."/>
        </authorList>
    </citation>
    <scope>NUCLEOTIDE SEQUENCE [LARGE SCALE GENOMIC DNA]</scope>
    <source>
        <strain>ATCC 49558 / DSM 4304 / JCM 9628 / NBRC 100126 / VC-16</strain>
    </source>
</reference>
<evidence type="ECO:0000255" key="1">
    <source>
        <dbReference type="HAMAP-Rule" id="MF_01366"/>
    </source>
</evidence>
<evidence type="ECO:0000305" key="2"/>
<gene>
    <name evidence="1" type="primary">rpl13</name>
    <name type="ordered locus">AF_1128</name>
</gene>
<protein>
    <recommendedName>
        <fullName evidence="1">Large ribosomal subunit protein uL13</fullName>
    </recommendedName>
    <alternativeName>
        <fullName evidence="2">50S ribosomal protein L13</fullName>
    </alternativeName>
</protein>
<keyword id="KW-1185">Reference proteome</keyword>
<keyword id="KW-0687">Ribonucleoprotein</keyword>
<keyword id="KW-0689">Ribosomal protein</keyword>
<feature type="chain" id="PRO_0000133757" description="Large ribosomal subunit protein uL13">
    <location>
        <begin position="1"/>
        <end position="156"/>
    </location>
</feature>
<organism>
    <name type="scientific">Archaeoglobus fulgidus (strain ATCC 49558 / DSM 4304 / JCM 9628 / NBRC 100126 / VC-16)</name>
    <dbReference type="NCBI Taxonomy" id="224325"/>
    <lineage>
        <taxon>Archaea</taxon>
        <taxon>Methanobacteriati</taxon>
        <taxon>Methanobacteriota</taxon>
        <taxon>Archaeoglobi</taxon>
        <taxon>Archaeoglobales</taxon>
        <taxon>Archaeoglobaceae</taxon>
        <taxon>Archaeoglobus</taxon>
    </lineage>
</organism>
<dbReference type="EMBL" id="AE000782">
    <property type="protein sequence ID" value="AAB90114.1"/>
    <property type="molecule type" value="Genomic_DNA"/>
</dbReference>
<dbReference type="PIR" id="G69390">
    <property type="entry name" value="G69390"/>
</dbReference>
<dbReference type="SMR" id="O29137"/>
<dbReference type="STRING" id="224325.AF_1128"/>
<dbReference type="PaxDb" id="224325-AF_1128"/>
<dbReference type="EnsemblBacteria" id="AAB90114">
    <property type="protein sequence ID" value="AAB90114"/>
    <property type="gene ID" value="AF_1128"/>
</dbReference>
<dbReference type="KEGG" id="afu:AF_1128"/>
<dbReference type="eggNOG" id="arCOG04242">
    <property type="taxonomic scope" value="Archaea"/>
</dbReference>
<dbReference type="HOGENOM" id="CLU_076922_1_0_2"/>
<dbReference type="OrthoDB" id="7668at2157"/>
<dbReference type="PhylomeDB" id="O29137"/>
<dbReference type="Proteomes" id="UP000002199">
    <property type="component" value="Chromosome"/>
</dbReference>
<dbReference type="GO" id="GO:0022625">
    <property type="term" value="C:cytosolic large ribosomal subunit"/>
    <property type="evidence" value="ECO:0007669"/>
    <property type="project" value="TreeGrafter"/>
</dbReference>
<dbReference type="GO" id="GO:0003729">
    <property type="term" value="F:mRNA binding"/>
    <property type="evidence" value="ECO:0007669"/>
    <property type="project" value="TreeGrafter"/>
</dbReference>
<dbReference type="GO" id="GO:0003735">
    <property type="term" value="F:structural constituent of ribosome"/>
    <property type="evidence" value="ECO:0007669"/>
    <property type="project" value="InterPro"/>
</dbReference>
<dbReference type="GO" id="GO:0017148">
    <property type="term" value="P:negative regulation of translation"/>
    <property type="evidence" value="ECO:0007669"/>
    <property type="project" value="TreeGrafter"/>
</dbReference>
<dbReference type="GO" id="GO:0006412">
    <property type="term" value="P:translation"/>
    <property type="evidence" value="ECO:0007669"/>
    <property type="project" value="UniProtKB-UniRule"/>
</dbReference>
<dbReference type="CDD" id="cd00392">
    <property type="entry name" value="Ribosomal_L13"/>
    <property type="match status" value="1"/>
</dbReference>
<dbReference type="Gene3D" id="3.90.1180.10">
    <property type="entry name" value="Ribosomal protein L13"/>
    <property type="match status" value="1"/>
</dbReference>
<dbReference type="HAMAP" id="MF_01366">
    <property type="entry name" value="Ribosomal_uL13"/>
    <property type="match status" value="1"/>
</dbReference>
<dbReference type="InterPro" id="IPR005822">
    <property type="entry name" value="Ribosomal_uL13"/>
</dbReference>
<dbReference type="InterPro" id="IPR005823">
    <property type="entry name" value="Ribosomal_uL13_bac-type"/>
</dbReference>
<dbReference type="InterPro" id="IPR023563">
    <property type="entry name" value="Ribosomal_uL13_CS"/>
</dbReference>
<dbReference type="InterPro" id="IPR005755">
    <property type="entry name" value="Ribosomal_uL13_euk/arc"/>
</dbReference>
<dbReference type="InterPro" id="IPR036899">
    <property type="entry name" value="Ribosomal_uL13_sf"/>
</dbReference>
<dbReference type="NCBIfam" id="TIGR01077">
    <property type="entry name" value="L13_A_E"/>
    <property type="match status" value="1"/>
</dbReference>
<dbReference type="NCBIfam" id="NF005004">
    <property type="entry name" value="PRK06394.1"/>
    <property type="match status" value="1"/>
</dbReference>
<dbReference type="PANTHER" id="PTHR11545:SF3">
    <property type="entry name" value="LARGE RIBOSOMAL SUBUNIT PROTEIN UL13"/>
    <property type="match status" value="1"/>
</dbReference>
<dbReference type="PANTHER" id="PTHR11545">
    <property type="entry name" value="RIBOSOMAL PROTEIN L13"/>
    <property type="match status" value="1"/>
</dbReference>
<dbReference type="Pfam" id="PF00572">
    <property type="entry name" value="Ribosomal_L13"/>
    <property type="match status" value="1"/>
</dbReference>
<dbReference type="PIRSF" id="PIRSF002181">
    <property type="entry name" value="Ribosomal_L13"/>
    <property type="match status" value="1"/>
</dbReference>
<dbReference type="SUPFAM" id="SSF52161">
    <property type="entry name" value="Ribosomal protein L13"/>
    <property type="match status" value="1"/>
</dbReference>
<dbReference type="PROSITE" id="PS00783">
    <property type="entry name" value="RIBOSOMAL_L13"/>
    <property type="match status" value="1"/>
</dbReference>
<sequence>MAVNVSRVIKTLGDDFTVIDASGHILGRLSSKIAKRLLNGERIVVVNAEKAVITGDKYMVFERYKEKYDRGSKEKGPYFPRHPERIFKRTVRGMLPWKSSRGRDAYRRLRVFMGVPEELQGREFEKIEDALLEKVSKTDKYVTLAEVSRYLGFRGV</sequence>
<comment type="function">
    <text evidence="1">This protein is one of the early assembly proteins of the 50S ribosomal subunit, although it is not seen to bind rRNA by itself. It is important during the early stages of 50S assembly.</text>
</comment>
<comment type="subunit">
    <text evidence="1">Part of the 50S ribosomal subunit.</text>
</comment>
<comment type="similarity">
    <text evidence="1">Belongs to the universal ribosomal protein uL13 family.</text>
</comment>
<proteinExistence type="inferred from homology"/>